<dbReference type="EMBL" id="CR378664">
    <property type="protein sequence ID" value="CAG18984.1"/>
    <property type="molecule type" value="Genomic_DNA"/>
</dbReference>
<dbReference type="RefSeq" id="WP_011217335.1">
    <property type="nucleotide sequence ID" value="NC_006370.1"/>
</dbReference>
<dbReference type="SMR" id="Q6LUP1"/>
<dbReference type="STRING" id="298386.PBPRA0561"/>
<dbReference type="KEGG" id="ppr:PBPRA0561"/>
<dbReference type="eggNOG" id="COG3022">
    <property type="taxonomic scope" value="Bacteria"/>
</dbReference>
<dbReference type="HOGENOM" id="CLU_061989_0_0_6"/>
<dbReference type="Proteomes" id="UP000000593">
    <property type="component" value="Chromosome 1"/>
</dbReference>
<dbReference type="GO" id="GO:0005829">
    <property type="term" value="C:cytosol"/>
    <property type="evidence" value="ECO:0007669"/>
    <property type="project" value="TreeGrafter"/>
</dbReference>
<dbReference type="GO" id="GO:0033194">
    <property type="term" value="P:response to hydroperoxide"/>
    <property type="evidence" value="ECO:0007669"/>
    <property type="project" value="TreeGrafter"/>
</dbReference>
<dbReference type="HAMAP" id="MF_00652">
    <property type="entry name" value="UPF0246"/>
    <property type="match status" value="1"/>
</dbReference>
<dbReference type="InterPro" id="IPR005583">
    <property type="entry name" value="YaaA"/>
</dbReference>
<dbReference type="NCBIfam" id="NF002541">
    <property type="entry name" value="PRK02101.1-1"/>
    <property type="match status" value="1"/>
</dbReference>
<dbReference type="NCBIfam" id="NF002542">
    <property type="entry name" value="PRK02101.1-3"/>
    <property type="match status" value="1"/>
</dbReference>
<dbReference type="PANTHER" id="PTHR30283:SF4">
    <property type="entry name" value="PEROXIDE STRESS RESISTANCE PROTEIN YAAA"/>
    <property type="match status" value="1"/>
</dbReference>
<dbReference type="PANTHER" id="PTHR30283">
    <property type="entry name" value="PEROXIDE STRESS RESPONSE PROTEIN YAAA"/>
    <property type="match status" value="1"/>
</dbReference>
<dbReference type="Pfam" id="PF03883">
    <property type="entry name" value="H2O2_YaaD"/>
    <property type="match status" value="1"/>
</dbReference>
<name>Y561_PHOPR</name>
<gene>
    <name type="ordered locus">PBPRA0561</name>
</gene>
<sequence length="259" mass="29389">MLIVVSPAKTLDYDSPLATQTYTLPELTDHSSELMKVCRELTPMDIASLMKVSDKIAGLNAARFAEWQPEFTTENARQAILAFKGDVYTGLAAETMTEEDFAYTQQHLRMLSGLYGLLRPLDLMQPYRLEMGTKLANPRGANLYQFWGSVITEKLNAALAEQGDNILINLASNEYFKSVKPKSLDAQLITPVFKDCKNGNYKVISFYAKKARGMMARYIIDNRIKSVDELKQFDVAGYYFVPAESTRKEFVFKREEQVK</sequence>
<comment type="similarity">
    <text evidence="1">Belongs to the UPF0246 family.</text>
</comment>
<accession>Q6LUP1</accession>
<organism>
    <name type="scientific">Photobacterium profundum (strain SS9)</name>
    <dbReference type="NCBI Taxonomy" id="298386"/>
    <lineage>
        <taxon>Bacteria</taxon>
        <taxon>Pseudomonadati</taxon>
        <taxon>Pseudomonadota</taxon>
        <taxon>Gammaproteobacteria</taxon>
        <taxon>Vibrionales</taxon>
        <taxon>Vibrionaceae</taxon>
        <taxon>Photobacterium</taxon>
    </lineage>
</organism>
<proteinExistence type="inferred from homology"/>
<protein>
    <recommendedName>
        <fullName evidence="1">UPF0246 protein PBPRA0561</fullName>
    </recommendedName>
</protein>
<keyword id="KW-1185">Reference proteome</keyword>
<evidence type="ECO:0000255" key="1">
    <source>
        <dbReference type="HAMAP-Rule" id="MF_00652"/>
    </source>
</evidence>
<reference key="1">
    <citation type="journal article" date="2005" name="Science">
        <title>Life at depth: Photobacterium profundum genome sequence and expression analysis.</title>
        <authorList>
            <person name="Vezzi A."/>
            <person name="Campanaro S."/>
            <person name="D'Angelo M."/>
            <person name="Simonato F."/>
            <person name="Vitulo N."/>
            <person name="Lauro F.M."/>
            <person name="Cestaro A."/>
            <person name="Malacrida G."/>
            <person name="Simionati B."/>
            <person name="Cannata N."/>
            <person name="Romualdi C."/>
            <person name="Bartlett D.H."/>
            <person name="Valle G."/>
        </authorList>
    </citation>
    <scope>NUCLEOTIDE SEQUENCE [LARGE SCALE GENOMIC DNA]</scope>
    <source>
        <strain>ATCC BAA-1253 / SS9</strain>
    </source>
</reference>
<feature type="chain" id="PRO_0000262036" description="UPF0246 protein PBPRA0561">
    <location>
        <begin position="1"/>
        <end position="259"/>
    </location>
</feature>